<reference key="1">
    <citation type="journal article" date="1987" name="Mol. Gen. Genet.">
        <title>Homology of Saccharomyces cerevisiae ADH4 to an iron-activated alcohol dehydrogenase from Zymomonas mobilis.</title>
        <authorList>
            <person name="Williamson V.M."/>
            <person name="Paquin C.E."/>
        </authorList>
    </citation>
    <scope>NUCLEOTIDE SEQUENCE [GENOMIC DNA]</scope>
</reference>
<reference key="2">
    <citation type="journal article" date="1996" name="Yeast">
        <title>Sequence of a 39,411 bp DNA fragment covering the left end of chromosome VII of Saccharomyces cerevisiae.</title>
        <authorList>
            <person name="Coissac E."/>
            <person name="Maillier E."/>
            <person name="Robineau S."/>
            <person name="Netter P."/>
        </authorList>
    </citation>
    <scope>NUCLEOTIDE SEQUENCE [GENOMIC DNA]</scope>
    <source>
        <strain>ATCC 96604 / S288c / FY1679</strain>
    </source>
</reference>
<reference key="3">
    <citation type="journal article" date="1997" name="Nature">
        <title>The nucleotide sequence of Saccharomyces cerevisiae chromosome VII.</title>
        <authorList>
            <person name="Tettelin H."/>
            <person name="Agostoni-Carbone M.L."/>
            <person name="Albermann K."/>
            <person name="Albers M."/>
            <person name="Arroyo J."/>
            <person name="Backes U."/>
            <person name="Barreiros T."/>
            <person name="Bertani I."/>
            <person name="Bjourson A.J."/>
            <person name="Brueckner M."/>
            <person name="Bruschi C.V."/>
            <person name="Carignani G."/>
            <person name="Castagnoli L."/>
            <person name="Cerdan E."/>
            <person name="Clemente M.L."/>
            <person name="Coblenz A."/>
            <person name="Coglievina M."/>
            <person name="Coissac E."/>
            <person name="Defoor E."/>
            <person name="Del Bino S."/>
            <person name="Delius H."/>
            <person name="Delneri D."/>
            <person name="de Wergifosse P."/>
            <person name="Dujon B."/>
            <person name="Durand P."/>
            <person name="Entian K.-D."/>
            <person name="Eraso P."/>
            <person name="Escribano V."/>
            <person name="Fabiani L."/>
            <person name="Fartmann B."/>
            <person name="Feroli F."/>
            <person name="Feuermann M."/>
            <person name="Frontali L."/>
            <person name="Garcia-Gonzalez M."/>
            <person name="Garcia-Saez M.I."/>
            <person name="Goffeau A."/>
            <person name="Guerreiro P."/>
            <person name="Hani J."/>
            <person name="Hansen M."/>
            <person name="Hebling U."/>
            <person name="Hernandez K."/>
            <person name="Heumann K."/>
            <person name="Hilger F."/>
            <person name="Hofmann B."/>
            <person name="Indge K.J."/>
            <person name="James C.M."/>
            <person name="Klima R."/>
            <person name="Koetter P."/>
            <person name="Kramer B."/>
            <person name="Kramer W."/>
            <person name="Lauquin G."/>
            <person name="Leuther H."/>
            <person name="Louis E.J."/>
            <person name="Maillier E."/>
            <person name="Marconi A."/>
            <person name="Martegani E."/>
            <person name="Mazon M.J."/>
            <person name="Mazzoni C."/>
            <person name="McReynolds A.D.K."/>
            <person name="Melchioretto P."/>
            <person name="Mewes H.-W."/>
            <person name="Minenkova O."/>
            <person name="Mueller-Auer S."/>
            <person name="Nawrocki A."/>
            <person name="Netter P."/>
            <person name="Neu R."/>
            <person name="Nombela C."/>
            <person name="Oliver S.G."/>
            <person name="Panzeri L."/>
            <person name="Paoluzi S."/>
            <person name="Plevani P."/>
            <person name="Portetelle D."/>
            <person name="Portillo F."/>
            <person name="Potier S."/>
            <person name="Purnelle B."/>
            <person name="Rieger M."/>
            <person name="Riles L."/>
            <person name="Rinaldi T."/>
            <person name="Robben J."/>
            <person name="Rodrigues-Pousada C."/>
            <person name="Rodriguez-Belmonte E."/>
            <person name="Rodriguez-Torres A.M."/>
            <person name="Rose M."/>
            <person name="Ruzzi M."/>
            <person name="Saliola M."/>
            <person name="Sanchez-Perez M."/>
            <person name="Schaefer B."/>
            <person name="Schaefer M."/>
            <person name="Scharfe M."/>
            <person name="Schmidheini T."/>
            <person name="Schreer A."/>
            <person name="Skala J."/>
            <person name="Souciet J.-L."/>
            <person name="Steensma H.Y."/>
            <person name="Talla E."/>
            <person name="Thierry A."/>
            <person name="Vandenbol M."/>
            <person name="van der Aart Q.J.M."/>
            <person name="Van Dyck L."/>
            <person name="Vanoni M."/>
            <person name="Verhasselt P."/>
            <person name="Voet M."/>
            <person name="Volckaert G."/>
            <person name="Wambutt R."/>
            <person name="Watson M.D."/>
            <person name="Weber N."/>
            <person name="Wedler E."/>
            <person name="Wedler H."/>
            <person name="Wipfli P."/>
            <person name="Wolf K."/>
            <person name="Wright L.F."/>
            <person name="Zaccaria P."/>
            <person name="Zimmermann M."/>
            <person name="Zollner A."/>
            <person name="Kleine K."/>
        </authorList>
    </citation>
    <scope>NUCLEOTIDE SEQUENCE [LARGE SCALE GENOMIC DNA]</scope>
    <source>
        <strain>ATCC 204508 / S288c</strain>
    </source>
</reference>
<reference key="4">
    <citation type="journal article" date="2014" name="G3 (Bethesda)">
        <title>The reference genome sequence of Saccharomyces cerevisiae: Then and now.</title>
        <authorList>
            <person name="Engel S.R."/>
            <person name="Dietrich F.S."/>
            <person name="Fisk D.G."/>
            <person name="Binkley G."/>
            <person name="Balakrishnan R."/>
            <person name="Costanzo M.C."/>
            <person name="Dwight S.S."/>
            <person name="Hitz B.C."/>
            <person name="Karra K."/>
            <person name="Nash R.S."/>
            <person name="Weng S."/>
            <person name="Wong E.D."/>
            <person name="Lloyd P."/>
            <person name="Skrzypek M.S."/>
            <person name="Miyasato S.R."/>
            <person name="Simison M."/>
            <person name="Cherry J.M."/>
        </authorList>
    </citation>
    <scope>GENOME REANNOTATION</scope>
    <source>
        <strain>ATCC 204508 / S288c</strain>
    </source>
</reference>
<reference key="5">
    <citation type="journal article" date="1986" name="Mol. Cell. Biol.">
        <title>Ty insertions at two loci account for most of the spontaneous antimycin A resistance mutations during growth at 15 degrees C of Saccharomyces cerevisiae strains lacking ADH1.</title>
        <authorList>
            <person name="Paquin C.E."/>
            <person name="Williamson V.M."/>
        </authorList>
    </citation>
    <scope>FUNCTION</scope>
</reference>
<reference key="6">
    <citation type="journal article" date="1988" name="Biochim. Biophys. Acta">
        <title>Overexpression, purification and properties of alcohol dehydrogenase IV from Saccharomyces cerevisiae.</title>
        <authorList>
            <person name="Drewke C."/>
            <person name="Ciriacy M."/>
        </authorList>
    </citation>
    <scope>FUNCTION</scope>
    <scope>CATALYTIC ACTIVITY</scope>
    <scope>BIOPHYSICOCHEMICAL PROPERTIES</scope>
    <scope>SUBUNIT</scope>
    <scope>COFACTOR</scope>
    <scope>ACTIVITY REGULATION</scope>
    <scope>SUBSTRATE SPECIFICITY</scope>
</reference>
<reference key="7">
    <citation type="journal article" date="1990" name="J. Bacteriol.">
        <title>Ethanol formation in adh0 mutants reveals the existence of a novel acetaldehyde-reducing activity in Saccharomyces cerevisiae.</title>
        <authorList>
            <person name="Drewke C."/>
            <person name="Thielen J."/>
            <person name="Ciriacy M."/>
        </authorList>
    </citation>
    <scope>FUNCTION</scope>
</reference>
<reference key="8">
    <citation type="journal article" date="2000" name="Genetics">
        <title>Zinc-regulated genes in Saccharomyces cerevisiae revealed by transposon tagging.</title>
        <authorList>
            <person name="Yuan D.S."/>
        </authorList>
    </citation>
    <scope>INDUCTION</scope>
</reference>
<reference key="9">
    <citation type="journal article" date="2000" name="Proc. Natl. Acad. Sci. U.S.A.">
        <title>Genome-wide characterization of the Zap1p zinc-responsive regulon in yeast.</title>
        <authorList>
            <person name="Lyons T.J."/>
            <person name="Gasch A.P."/>
            <person name="Gaither L.A."/>
            <person name="Botstein D."/>
            <person name="Brown P.O."/>
            <person name="Eide D.J."/>
        </authorList>
    </citation>
    <scope>INDUCTION</scope>
    <scope>IDENTIFICATION OF PROBABLE INITIATION SITE</scope>
</reference>
<reference key="10">
    <citation type="journal article" date="2003" name="Nature">
        <title>Global analysis of protein localization in budding yeast.</title>
        <authorList>
            <person name="Huh W.-K."/>
            <person name="Falvo J.V."/>
            <person name="Gerke L.C."/>
            <person name="Carroll A.S."/>
            <person name="Howson R.W."/>
            <person name="Weissman J.S."/>
            <person name="O'Shea E.K."/>
        </authorList>
    </citation>
    <scope>SUBCELLULAR LOCATION [LARGE SCALE ANALYSIS]</scope>
</reference>
<reference key="11">
    <citation type="journal article" date="2003" name="Nature">
        <title>Global analysis of protein expression in yeast.</title>
        <authorList>
            <person name="Ghaemmaghami S."/>
            <person name="Huh W.-K."/>
            <person name="Bower K."/>
            <person name="Howson R.W."/>
            <person name="Belle A."/>
            <person name="Dephoure N."/>
            <person name="O'Shea E.K."/>
            <person name="Weissman J.S."/>
        </authorList>
    </citation>
    <scope>LEVEL OF PROTEIN EXPRESSION [LARGE SCALE ANALYSIS]</scope>
</reference>
<reference key="12">
    <citation type="journal article" date="2006" name="EMBO J.">
        <title>Repression of ADH1 and ADH3 during zinc deficiency by Zap1-induced intergenic RNA transcripts.</title>
        <authorList>
            <person name="Bird A.J."/>
            <person name="Gordon M."/>
            <person name="Eide D.J."/>
            <person name="Winge D.R."/>
        </authorList>
    </citation>
    <scope>INDUCTION</scope>
</reference>
<reference key="13">
    <citation type="journal article" date="2006" name="J. Biosci. Bioeng.">
        <title>Characterization of low-acetic-acid-producing yeast isolated from 2-deoxyglucose-resistant mutants and its application to high-gravity brewing.</title>
        <authorList>
            <person name="Mizuno A."/>
            <person name="Tabei H."/>
            <person name="Iwahuti M."/>
        </authorList>
    </citation>
    <scope>EXPRESSION LEVEL IN BREWING STRAINS</scope>
</reference>
<reference key="14">
    <citation type="journal article" date="2007" name="Appl. Environ. Microbiol.">
        <title>Physiological and transcriptional responses of Saccharomyces cerevisiae to zinc limitation in chemostat cultures.</title>
        <authorList>
            <person name="De Nicola R."/>
            <person name="Hazelwood L.A."/>
            <person name="De Hulster E.A.F."/>
            <person name="Walsh M.C."/>
            <person name="Knijnenburg T.A."/>
            <person name="Reinders M.J.T."/>
            <person name="Walker G.M."/>
            <person name="Pronk J.T."/>
            <person name="Daran J.-M."/>
            <person name="Daran-Lapujade P."/>
        </authorList>
    </citation>
    <scope>INDUCTION</scope>
</reference>
<reference key="15">
    <citation type="journal article" date="2008" name="Appl. Microbiol. Biotechnol.">
        <title>Acetaldehyde addition throughout the growth phase alleviates the phenotypic effect of zinc deficiency in Saccharomyces cerevisiae.</title>
        <authorList>
            <person name="Cheraiti N."/>
            <person name="Sauvage F.-X."/>
            <person name="Salmon J.-M."/>
        </authorList>
    </citation>
    <scope>FUNCTION</scope>
    <scope>INDUCTION</scope>
</reference>
<reference key="16">
    <citation type="journal article" date="2012" name="FEMS Yeast Res.">
        <title>Molecular and physiological aspects of alcohol dehydrogenases in the ethanol metabolism of Saccharomyces cerevisiae.</title>
        <authorList>
            <person name="de Smidt O."/>
            <person name="du Preez J.C."/>
            <person name="Albertyn J."/>
        </authorList>
    </citation>
    <scope>FUNCTION</scope>
</reference>
<gene>
    <name evidence="13" type="primary">ADH4</name>
    <name type="synonym">ZRG5</name>
    <name type="ordered locus">YGL256W</name>
    <name type="ORF">NRC465</name>
</gene>
<comment type="function">
    <text evidence="9 10 11 12">Alcohol dehydrogenase specific for ethanol. Acts mainyl as a mitochondrial formaldehyde dehydrogenase and has no effect on ethanol production (PubMed:2193925). Shows drastically reduced activity towards primary alcohols from 4 carbon atoms upward. Isomers of aliphatic alcohol, as well as secondary alcohols and glycerol are not used at all (PubMed:17938904, PubMed:3282541). The role of ADH4 in yeast metabolism is not yet known, but ADH4 is not responsible for the production of ethanol during growth on glucose nor responsible for the oxidation of ethanol to acetaldehyde (PubMed:22094012).</text>
</comment>
<comment type="catalytic activity">
    <reaction evidence="12">
        <text>a primary alcohol + NAD(+) = an aldehyde + NADH + H(+)</text>
        <dbReference type="Rhea" id="RHEA:10736"/>
        <dbReference type="ChEBI" id="CHEBI:15378"/>
        <dbReference type="ChEBI" id="CHEBI:15734"/>
        <dbReference type="ChEBI" id="CHEBI:17478"/>
        <dbReference type="ChEBI" id="CHEBI:57540"/>
        <dbReference type="ChEBI" id="CHEBI:57945"/>
        <dbReference type="EC" id="1.1.1.1"/>
    </reaction>
</comment>
<comment type="catalytic activity">
    <reaction evidence="12">
        <text>ethanol + NAD(+) = acetaldehyde + NADH + H(+)</text>
        <dbReference type="Rhea" id="RHEA:25290"/>
        <dbReference type="ChEBI" id="CHEBI:15343"/>
        <dbReference type="ChEBI" id="CHEBI:15378"/>
        <dbReference type="ChEBI" id="CHEBI:16236"/>
        <dbReference type="ChEBI" id="CHEBI:57540"/>
        <dbReference type="ChEBI" id="CHEBI:57945"/>
        <dbReference type="EC" id="1.1.1.1"/>
    </reaction>
    <physiologicalReaction direction="right-to-left" evidence="12">
        <dbReference type="Rhea" id="RHEA:25292"/>
    </physiologicalReaction>
</comment>
<comment type="cofactor">
    <cofactor evidence="12">
        <name>Zn(2+)</name>
        <dbReference type="ChEBI" id="CHEBI:29105"/>
    </cofactor>
    <cofactor evidence="12">
        <name>Fe(2+)</name>
        <dbReference type="ChEBI" id="CHEBI:29033"/>
    </cofactor>
    <text evidence="12">Zinc. May bind iron when zinc levels are limiting.</text>
</comment>
<comment type="activity regulation">
    <text evidence="12">Inhibited by EDTA.</text>
</comment>
<comment type="biophysicochemical properties">
    <kinetics>
        <KM evidence="12">59 mM for NAD</KM>
        <KM evidence="12">122 uM for NADH</KM>
        <KM evidence="12">2.83 mM for acetaldehyde</KM>
        <KM evidence="12">16.7 mM for ethanol</KM>
    </kinetics>
    <phDependence>
        <text evidence="12">Optimum pH is 8.3.</text>
    </phDependence>
</comment>
<comment type="subunit">
    <text evidence="12">Homodimer.</text>
</comment>
<comment type="subcellular location">
    <subcellularLocation>
        <location evidence="4">Mitochondrion</location>
    </subcellularLocation>
</comment>
<comment type="induction">
    <text evidence="2 3 7 8 9">Induced by transcription factor ZAP1 in response to zinc deficiency.</text>
</comment>
<comment type="miscellaneous">
    <text evidence="6">While ADH4 is expressed at only low levels in laboratory strains, it is often highly expressed in brewing strains.</text>
</comment>
<comment type="miscellaneous">
    <text evidence="5">Present with 125 molecules/cell in log phase SD medium.</text>
</comment>
<comment type="similarity">
    <text evidence="14">Belongs to the iron-containing alcohol dehydrogenase family.</text>
</comment>
<comment type="sequence caution" evidence="14">
    <conflict type="erroneous initiation">
        <sequence resource="EMBL-CDS" id="CAA64131"/>
    </conflict>
    <text>Extended N-terminus.</text>
</comment>
<comment type="sequence caution" evidence="14">
    <conflict type="erroneous initiation">
        <sequence resource="EMBL-CDS" id="CAA96976"/>
    </conflict>
    <text>Extended N-terminus.</text>
</comment>
<feature type="chain" id="PRO_0000087817" description="Alcohol dehydrogenase 4">
    <location>
        <begin position="1"/>
        <end position="382"/>
    </location>
</feature>
<feature type="binding site" evidence="1">
    <location>
        <position position="40"/>
    </location>
    <ligand>
        <name>NAD(+)</name>
        <dbReference type="ChEBI" id="CHEBI:57540"/>
    </ligand>
</feature>
<feature type="binding site" evidence="1">
    <location>
        <position position="72"/>
    </location>
    <ligand>
        <name>NAD(+)</name>
        <dbReference type="ChEBI" id="CHEBI:57540"/>
    </ligand>
</feature>
<feature type="binding site" evidence="1">
    <location>
        <position position="99"/>
    </location>
    <ligand>
        <name>NAD(+)</name>
        <dbReference type="ChEBI" id="CHEBI:57540"/>
    </ligand>
</feature>
<feature type="binding site" evidence="1">
    <location>
        <position position="100"/>
    </location>
    <ligand>
        <name>NAD(+)</name>
        <dbReference type="ChEBI" id="CHEBI:57540"/>
    </ligand>
</feature>
<feature type="binding site" evidence="1">
    <location>
        <position position="139"/>
    </location>
    <ligand>
        <name>NAD(+)</name>
        <dbReference type="ChEBI" id="CHEBI:57540"/>
    </ligand>
</feature>
<feature type="binding site" evidence="1">
    <location>
        <position position="140"/>
    </location>
    <ligand>
        <name>NAD(+)</name>
        <dbReference type="ChEBI" id="CHEBI:57540"/>
    </ligand>
</feature>
<feature type="binding site" evidence="1">
    <location>
        <position position="148"/>
    </location>
    <ligand>
        <name>NAD(+)</name>
        <dbReference type="ChEBI" id="CHEBI:57540"/>
    </ligand>
</feature>
<feature type="binding site" evidence="1">
    <location>
        <position position="150"/>
    </location>
    <ligand>
        <name>NAD(+)</name>
        <dbReference type="ChEBI" id="CHEBI:57540"/>
    </ligand>
</feature>
<feature type="binding site" evidence="1">
    <location>
        <position position="161"/>
    </location>
    <ligand>
        <name>NAD(+)</name>
        <dbReference type="ChEBI" id="CHEBI:57540"/>
    </ligand>
</feature>
<feature type="binding site" evidence="1">
    <location>
        <position position="183"/>
    </location>
    <ligand>
        <name>NAD(+)</name>
        <dbReference type="ChEBI" id="CHEBI:57540"/>
    </ligand>
</feature>
<feature type="binding site" evidence="1">
    <location>
        <position position="195"/>
    </location>
    <ligand>
        <name>Fe(2+)</name>
        <dbReference type="ChEBI" id="CHEBI:29033"/>
    </ligand>
</feature>
<feature type="binding site" evidence="1">
    <location>
        <position position="199"/>
    </location>
    <ligand>
        <name>Fe(2+)</name>
        <dbReference type="ChEBI" id="CHEBI:29033"/>
    </ligand>
</feature>
<feature type="binding site" evidence="1">
    <location>
        <position position="264"/>
    </location>
    <ligand>
        <name>Fe(2+)</name>
        <dbReference type="ChEBI" id="CHEBI:29033"/>
    </ligand>
</feature>
<feature type="binding site" evidence="1">
    <location>
        <position position="268"/>
    </location>
    <ligand>
        <name>NAD(+)</name>
        <dbReference type="ChEBI" id="CHEBI:57540"/>
    </ligand>
</feature>
<feature type="binding site" evidence="1">
    <location>
        <position position="278"/>
    </location>
    <ligand>
        <name>Fe(2+)</name>
        <dbReference type="ChEBI" id="CHEBI:29033"/>
    </ligand>
</feature>
<feature type="binding site" evidence="1">
    <location>
        <position position="278"/>
    </location>
    <ligand>
        <name>NAD(+)</name>
        <dbReference type="ChEBI" id="CHEBI:57540"/>
    </ligand>
</feature>
<feature type="sequence conflict" description="In Ref. 1; CAA29410." evidence="14" ref="1">
    <original>D</original>
    <variation>G</variation>
    <location>
        <position position="60"/>
    </location>
</feature>
<feature type="sequence conflict" description="In Ref. 1; CAA29410." evidence="14" ref="1">
    <original>Q</original>
    <variation>E</variation>
    <location>
        <position position="88"/>
    </location>
</feature>
<feature type="sequence conflict" description="In Ref. 1; CAA29410." evidence="14" ref="1">
    <original>F</original>
    <variation>C</variation>
    <location>
        <position position="310"/>
    </location>
</feature>
<feature type="sequence conflict" description="In Ref. 1; CAA29410." evidence="14" ref="1">
    <original>E</original>
    <variation>D</variation>
    <location>
        <position position="339"/>
    </location>
</feature>
<feature type="sequence conflict" description="In Ref. 1; CAA29410." evidence="14" ref="1">
    <original>E</original>
    <variation>D</variation>
    <location>
        <position position="348"/>
    </location>
</feature>
<accession>P10127</accession>
<accession>D6VV79</accession>
<organism>
    <name type="scientific">Saccharomyces cerevisiae (strain ATCC 204508 / S288c)</name>
    <name type="common">Baker's yeast</name>
    <dbReference type="NCBI Taxonomy" id="559292"/>
    <lineage>
        <taxon>Eukaryota</taxon>
        <taxon>Fungi</taxon>
        <taxon>Dikarya</taxon>
        <taxon>Ascomycota</taxon>
        <taxon>Saccharomycotina</taxon>
        <taxon>Saccharomycetes</taxon>
        <taxon>Saccharomycetales</taxon>
        <taxon>Saccharomycetaceae</taxon>
        <taxon>Saccharomyces</taxon>
    </lineage>
</organism>
<keyword id="KW-0408">Iron</keyword>
<keyword id="KW-0479">Metal-binding</keyword>
<keyword id="KW-0496">Mitochondrion</keyword>
<keyword id="KW-0520">NAD</keyword>
<keyword id="KW-0560">Oxidoreductase</keyword>
<keyword id="KW-1185">Reference proteome</keyword>
<keyword id="KW-0862">Zinc</keyword>
<protein>
    <recommendedName>
        <fullName evidence="14">Alcohol dehydrogenase 4</fullName>
        <ecNumber evidence="12">1.1.1.1</ecNumber>
    </recommendedName>
    <alternativeName>
        <fullName>Alcohol dehydrogenase IV</fullName>
        <shortName>ADHIV</shortName>
    </alternativeName>
</protein>
<dbReference type="EC" id="1.1.1.1" evidence="12"/>
<dbReference type="EMBL" id="X05992">
    <property type="protein sequence ID" value="CAA29410.1"/>
    <property type="molecule type" value="Genomic_DNA"/>
</dbReference>
<dbReference type="EMBL" id="X94357">
    <property type="protein sequence ID" value="CAA64131.1"/>
    <property type="status" value="ALT_INIT"/>
    <property type="molecule type" value="Genomic_DNA"/>
</dbReference>
<dbReference type="EMBL" id="Z72778">
    <property type="protein sequence ID" value="CAA96976.1"/>
    <property type="status" value="ALT_INIT"/>
    <property type="molecule type" value="Genomic_DNA"/>
</dbReference>
<dbReference type="EMBL" id="BK006941">
    <property type="protein sequence ID" value="DAA07863.1"/>
    <property type="molecule type" value="Genomic_DNA"/>
</dbReference>
<dbReference type="PIR" id="S61605">
    <property type="entry name" value="DEBY4"/>
</dbReference>
<dbReference type="RefSeq" id="NP_011258.2">
    <property type="nucleotide sequence ID" value="NM_001181122.1"/>
</dbReference>
<dbReference type="SMR" id="P10127"/>
<dbReference type="BioGRID" id="33023">
    <property type="interactions" value="213"/>
</dbReference>
<dbReference type="DIP" id="DIP-4812N"/>
<dbReference type="FunCoup" id="P10127">
    <property type="interactions" value="701"/>
</dbReference>
<dbReference type="IntAct" id="P10127">
    <property type="interactions" value="11"/>
</dbReference>
<dbReference type="MINT" id="P10127"/>
<dbReference type="STRING" id="4932.YGL256W"/>
<dbReference type="PaxDb" id="4932-YGL256W"/>
<dbReference type="PeptideAtlas" id="P10127"/>
<dbReference type="EnsemblFungi" id="YGL256W_mRNA">
    <property type="protein sequence ID" value="YGL256W"/>
    <property type="gene ID" value="YGL256W"/>
</dbReference>
<dbReference type="GeneID" id="852636"/>
<dbReference type="KEGG" id="sce:YGL256W"/>
<dbReference type="AGR" id="SGD:S000003225"/>
<dbReference type="SGD" id="S000003225">
    <property type="gene designation" value="ADH4"/>
</dbReference>
<dbReference type="VEuPathDB" id="FungiDB:YGL256W"/>
<dbReference type="eggNOG" id="KOG3857">
    <property type="taxonomic scope" value="Eukaryota"/>
</dbReference>
<dbReference type="GeneTree" id="ENSGT00390000003849"/>
<dbReference type="HOGENOM" id="CLU_007207_0_0_1"/>
<dbReference type="InParanoid" id="P10127"/>
<dbReference type="OMA" id="HAMSHQV"/>
<dbReference type="OrthoDB" id="339764at2759"/>
<dbReference type="BioCyc" id="MetaCyc:YGL256W-MONOMER"/>
<dbReference type="BioCyc" id="YEAST:YGL256W-MONOMER"/>
<dbReference type="SABIO-RK" id="P10127"/>
<dbReference type="BioGRID-ORCS" id="852636">
    <property type="hits" value="2 hits in 10 CRISPR screens"/>
</dbReference>
<dbReference type="PRO" id="PR:P10127"/>
<dbReference type="Proteomes" id="UP000002311">
    <property type="component" value="Chromosome VII"/>
</dbReference>
<dbReference type="RNAct" id="P10127">
    <property type="molecule type" value="protein"/>
</dbReference>
<dbReference type="GO" id="GO:0005739">
    <property type="term" value="C:mitochondrion"/>
    <property type="evidence" value="ECO:0000314"/>
    <property type="project" value="SGD"/>
</dbReference>
<dbReference type="GO" id="GO:0004022">
    <property type="term" value="F:alcohol dehydrogenase (NAD+) activity"/>
    <property type="evidence" value="ECO:0000314"/>
    <property type="project" value="SGD"/>
</dbReference>
<dbReference type="GO" id="GO:0120542">
    <property type="term" value="F:ethanol dehydrogenase (NAD+) activity"/>
    <property type="evidence" value="ECO:0007669"/>
    <property type="project" value="RHEA"/>
</dbReference>
<dbReference type="GO" id="GO:0046872">
    <property type="term" value="F:metal ion binding"/>
    <property type="evidence" value="ECO:0007669"/>
    <property type="project" value="UniProtKB-KW"/>
</dbReference>
<dbReference type="GO" id="GO:0000947">
    <property type="term" value="P:amino acid catabolic process to alcohol via Ehrlich pathway"/>
    <property type="evidence" value="ECO:0000316"/>
    <property type="project" value="SGD"/>
</dbReference>
<dbReference type="GO" id="GO:0006113">
    <property type="term" value="P:fermentation"/>
    <property type="evidence" value="ECO:0000315"/>
    <property type="project" value="SGD"/>
</dbReference>
<dbReference type="CDD" id="cd08188">
    <property type="entry name" value="PDDH"/>
    <property type="match status" value="1"/>
</dbReference>
<dbReference type="FunFam" id="3.40.50.1970:FF:000003">
    <property type="entry name" value="Alcohol dehydrogenase, iron-containing"/>
    <property type="match status" value="1"/>
</dbReference>
<dbReference type="FunFam" id="1.20.1090.10:FF:000001">
    <property type="entry name" value="Aldehyde-alcohol dehydrogenase"/>
    <property type="match status" value="1"/>
</dbReference>
<dbReference type="Gene3D" id="3.40.50.1970">
    <property type="match status" value="1"/>
</dbReference>
<dbReference type="Gene3D" id="1.20.1090.10">
    <property type="entry name" value="Dehydroquinate synthase-like - alpha domain"/>
    <property type="match status" value="1"/>
</dbReference>
<dbReference type="InterPro" id="IPR001670">
    <property type="entry name" value="ADH_Fe/GldA"/>
</dbReference>
<dbReference type="InterPro" id="IPR056798">
    <property type="entry name" value="ADH_Fe_C"/>
</dbReference>
<dbReference type="InterPro" id="IPR018211">
    <property type="entry name" value="ADH_Fe_CS"/>
</dbReference>
<dbReference type="InterPro" id="IPR039697">
    <property type="entry name" value="Alcohol_dehydrogenase_Fe"/>
</dbReference>
<dbReference type="PANTHER" id="PTHR11496">
    <property type="entry name" value="ALCOHOL DEHYDROGENASE"/>
    <property type="match status" value="1"/>
</dbReference>
<dbReference type="PANTHER" id="PTHR11496:SF102">
    <property type="entry name" value="ALCOHOL DEHYDROGENASE 4"/>
    <property type="match status" value="1"/>
</dbReference>
<dbReference type="Pfam" id="PF25137">
    <property type="entry name" value="ADH_Fe_C"/>
    <property type="match status" value="1"/>
</dbReference>
<dbReference type="Pfam" id="PF00465">
    <property type="entry name" value="Fe-ADH"/>
    <property type="match status" value="1"/>
</dbReference>
<dbReference type="SUPFAM" id="SSF56796">
    <property type="entry name" value="Dehydroquinate synthase-like"/>
    <property type="match status" value="1"/>
</dbReference>
<dbReference type="PROSITE" id="PS00913">
    <property type="entry name" value="ADH_IRON_1"/>
    <property type="match status" value="1"/>
</dbReference>
<dbReference type="PROSITE" id="PS00060">
    <property type="entry name" value="ADH_IRON_2"/>
    <property type="match status" value="1"/>
</dbReference>
<evidence type="ECO:0000250" key="1">
    <source>
        <dbReference type="UniProtKB" id="P0DJA2"/>
    </source>
</evidence>
<evidence type="ECO:0000269" key="2">
    <source>
    </source>
</evidence>
<evidence type="ECO:0000269" key="3">
    <source>
    </source>
</evidence>
<evidence type="ECO:0000269" key="4">
    <source>
    </source>
</evidence>
<evidence type="ECO:0000269" key="5">
    <source>
    </source>
</evidence>
<evidence type="ECO:0000269" key="6">
    <source>
    </source>
</evidence>
<evidence type="ECO:0000269" key="7">
    <source>
    </source>
</evidence>
<evidence type="ECO:0000269" key="8">
    <source>
    </source>
</evidence>
<evidence type="ECO:0000269" key="9">
    <source>
    </source>
</evidence>
<evidence type="ECO:0000269" key="10">
    <source>
    </source>
</evidence>
<evidence type="ECO:0000269" key="11">
    <source>
    </source>
</evidence>
<evidence type="ECO:0000269" key="12">
    <source>
    </source>
</evidence>
<evidence type="ECO:0000303" key="13">
    <source>
    </source>
</evidence>
<evidence type="ECO:0000305" key="14"/>
<name>ADH4_YEAST</name>
<sequence length="382" mass="41142">MSSVTGFYIPPISFFGEGALEETADYIKNKDYKKALIVTDPGIAAIGLSGRVQKMLEERDLNVAIYDKTQPNPNIANVTAGLKVLKEQNSEIVVSIGGGSAHDNAKAIALLATNGGEIGDYEGVNQSKKAALPLFAINTTAGTASEMTRFTIISNEEKKIKMAIIDNNVTPAVAVNDPSTMFGLPPALTAATGLDALTHCIEAYVSTASNPITDACALKGIDLINESLVAAYKDGKDKKARTDMCYAEYLAGMAFNNASLGYVHALAHQLGGFYHLPHGVCNAVLLPHVQEANMQCPKAKKRLGEIALHFGASQEDPEETIKALHVLNRTMNIPRNLKELGVKTEDFEILAEHAMHDACHLTNPVQFTKEQVVAIIKKAYEY</sequence>
<proteinExistence type="evidence at protein level"/>